<sequence length="397" mass="41752">MVHLTSALLVAGAAFAAAAPMNHIFERQDTCSVSDNYPTVNSAKLPDPFTTASGEKVTTKDQFECRRAEINKILQQYELGEYPGPPDSVEASLSGNSITVRVTVGSKSISFSASIRKPSGAGPFPAIIGIGGASIPIPSNVATITFNNDEFGAQMGSGSRGQGKFYDLFGRDHSAGSLTAWAWGVDRLIDGLEQVGAQASGIDTKRLGVTGCSRNGKGAFITGALVDRIALTIPQESGAGGAACWRISDQQKAAGANIQTAAQIITENPWFSRNFDPHVNSITSVPQDHHLLAALIVPRGLAVFENNIDWLGPVSTTGCMAAGRLIYKAYGVPNNMGFSLVGGHNHCQFPSSQNQDLNSYINYFLLGQGSPSGVEHSDVNVNVAEWAPWGAGAPTLA</sequence>
<proteinExistence type="evidence at protein level"/>
<evidence type="ECO:0000255" key="1"/>
<evidence type="ECO:0000269" key="2">
    <source>
    </source>
</evidence>
<evidence type="ECO:0000269" key="3">
    <source>
    </source>
</evidence>
<evidence type="ECO:0000269" key="4">
    <source>
    </source>
</evidence>
<evidence type="ECO:0000303" key="5">
    <source>
    </source>
</evidence>
<evidence type="ECO:0000305" key="6"/>
<evidence type="ECO:0000305" key="7">
    <source>
    </source>
</evidence>
<evidence type="ECO:0000305" key="8">
    <source>
    </source>
</evidence>
<evidence type="ECO:0007829" key="9">
    <source>
        <dbReference type="PDB" id="4G4G"/>
    </source>
</evidence>
<name>GCE2_THET4</name>
<accession>G2QJR6</accession>
<protein>
    <recommendedName>
        <fullName evidence="6">4-O-methyl-glucuronoyl methylesterase</fullName>
        <ecNumber evidence="2">3.1.1.117</ecNumber>
    </recommendedName>
    <alternativeName>
        <fullName evidence="5">Glucuronoyl esterase 2</fullName>
        <shortName evidence="5">GE2</shortName>
    </alternativeName>
</protein>
<organism>
    <name type="scientific">Thermothelomyces thermophilus (strain ATCC 42464 / BCRC 31852 / DSM 1799)</name>
    <name type="common">Sporotrichum thermophile</name>
    <dbReference type="NCBI Taxonomy" id="573729"/>
    <lineage>
        <taxon>Eukaryota</taxon>
        <taxon>Fungi</taxon>
        <taxon>Dikarya</taxon>
        <taxon>Ascomycota</taxon>
        <taxon>Pezizomycotina</taxon>
        <taxon>Sordariomycetes</taxon>
        <taxon>Sordariomycetidae</taxon>
        <taxon>Sordariales</taxon>
        <taxon>Chaetomiaceae</taxon>
        <taxon>Thermothelomyces</taxon>
    </lineage>
</organism>
<feature type="signal peptide" evidence="1">
    <location>
        <begin position="1"/>
        <end position="18"/>
    </location>
</feature>
<feature type="chain" id="PRO_0000419176" description="4-O-methyl-glucuronoyl methylesterase">
    <location>
        <begin position="19"/>
        <end position="397"/>
    </location>
</feature>
<feature type="short sequence motif" description="GXSYXG catalytic site motif" evidence="7">
    <location>
        <begin position="211"/>
        <end position="216"/>
    </location>
</feature>
<feature type="active site" description="Nucleophile" evidence="2 8">
    <location>
        <position position="213"/>
    </location>
</feature>
<feature type="active site" description="Proton donor/acceptor" evidence="8">
    <location>
        <position position="346"/>
    </location>
</feature>
<feature type="binding site" evidence="3">
    <location>
        <position position="217"/>
    </location>
    <ligand>
        <name>substrate</name>
    </ligand>
</feature>
<feature type="binding site" evidence="3">
    <location>
        <position position="259"/>
    </location>
    <ligand>
        <name>substrate</name>
    </ligand>
</feature>
<feature type="binding site" evidence="3">
    <location>
        <position position="267"/>
    </location>
    <ligand>
        <name>substrate</name>
    </ligand>
</feature>
<feature type="binding site" evidence="3">
    <location>
        <position position="310"/>
    </location>
    <ligand>
        <name>substrate</name>
    </ligand>
</feature>
<feature type="disulfide bond" evidence="3">
    <location>
        <begin position="31"/>
        <end position="65"/>
    </location>
</feature>
<feature type="disulfide bond" evidence="3">
    <location>
        <begin position="212"/>
        <end position="347"/>
    </location>
</feature>
<feature type="disulfide bond" evidence="3">
    <location>
        <begin position="244"/>
        <end position="319"/>
    </location>
</feature>
<feature type="mutagenesis site" description="Abolishes catalytic activity." evidence="2">
    <original>S</original>
    <variation>A</variation>
    <location>
        <position position="213"/>
    </location>
</feature>
<feature type="helix" evidence="9">
    <location>
        <begin position="60"/>
        <end position="77"/>
    </location>
</feature>
<feature type="strand" evidence="9">
    <location>
        <begin position="87"/>
        <end position="93"/>
    </location>
</feature>
<feature type="strand" evidence="9">
    <location>
        <begin position="95"/>
        <end position="104"/>
    </location>
</feature>
<feature type="strand" evidence="9">
    <location>
        <begin position="107"/>
        <end position="116"/>
    </location>
</feature>
<feature type="strand" evidence="9">
    <location>
        <begin position="119"/>
        <end position="121"/>
    </location>
</feature>
<feature type="strand" evidence="9">
    <location>
        <begin position="124"/>
        <end position="131"/>
    </location>
</feature>
<feature type="strand" evidence="9">
    <location>
        <begin position="141"/>
        <end position="146"/>
    </location>
</feature>
<feature type="helix" evidence="9">
    <location>
        <begin position="148"/>
        <end position="151"/>
    </location>
</feature>
<feature type="helix" evidence="9">
    <location>
        <begin position="157"/>
        <end position="159"/>
    </location>
</feature>
<feature type="helix" evidence="9">
    <location>
        <begin position="164"/>
        <end position="169"/>
    </location>
</feature>
<feature type="helix" evidence="9">
    <location>
        <begin position="177"/>
        <end position="195"/>
    </location>
</feature>
<feature type="helix" evidence="9">
    <location>
        <begin position="197"/>
        <end position="200"/>
    </location>
</feature>
<feature type="strand" evidence="9">
    <location>
        <begin position="202"/>
        <end position="212"/>
    </location>
</feature>
<feature type="helix" evidence="9">
    <location>
        <begin position="214"/>
        <end position="225"/>
    </location>
</feature>
<feature type="strand" evidence="9">
    <location>
        <begin position="230"/>
        <end position="236"/>
    </location>
</feature>
<feature type="turn" evidence="9">
    <location>
        <begin position="239"/>
        <end position="242"/>
    </location>
</feature>
<feature type="helix" evidence="9">
    <location>
        <begin position="245"/>
        <end position="253"/>
    </location>
</feature>
<feature type="helix" evidence="9">
    <location>
        <begin position="261"/>
        <end position="264"/>
    </location>
</feature>
<feature type="turn" evidence="9">
    <location>
        <begin position="265"/>
        <end position="267"/>
    </location>
</feature>
<feature type="turn" evidence="9">
    <location>
        <begin position="273"/>
        <end position="275"/>
    </location>
</feature>
<feature type="helix" evidence="9">
    <location>
        <begin position="276"/>
        <end position="278"/>
    </location>
</feature>
<feature type="helix" evidence="9">
    <location>
        <begin position="282"/>
        <end position="284"/>
    </location>
</feature>
<feature type="helix" evidence="9">
    <location>
        <begin position="289"/>
        <end position="291"/>
    </location>
</feature>
<feature type="helix" evidence="9">
    <location>
        <begin position="292"/>
        <end position="296"/>
    </location>
</feature>
<feature type="strand" evidence="9">
    <location>
        <begin position="299"/>
        <end position="305"/>
    </location>
</feature>
<feature type="turn" evidence="9">
    <location>
        <begin position="309"/>
        <end position="311"/>
    </location>
</feature>
<feature type="helix" evidence="9">
    <location>
        <begin position="313"/>
        <end position="330"/>
    </location>
</feature>
<feature type="helix" evidence="9">
    <location>
        <begin position="333"/>
        <end position="335"/>
    </location>
</feature>
<feature type="strand" evidence="9">
    <location>
        <begin position="336"/>
        <end position="340"/>
    </location>
</feature>
<feature type="helix" evidence="9">
    <location>
        <begin position="351"/>
        <end position="353"/>
    </location>
</feature>
<feature type="helix" evidence="9">
    <location>
        <begin position="354"/>
        <end position="364"/>
    </location>
</feature>
<feature type="strand" evidence="9">
    <location>
        <begin position="375"/>
        <end position="379"/>
    </location>
</feature>
<feature type="helix" evidence="9">
    <location>
        <begin position="383"/>
        <end position="386"/>
    </location>
</feature>
<reference key="1">
    <citation type="journal article" date="2011" name="Nat. Biotechnol.">
        <title>Comparative genomic analysis of the thermophilic biomass-degrading fungi Myceliophthora thermophila and Thielavia terrestris.</title>
        <authorList>
            <person name="Berka R.M."/>
            <person name="Grigoriev I.V."/>
            <person name="Otillar R."/>
            <person name="Salamov A."/>
            <person name="Grimwood J."/>
            <person name="Reid I."/>
            <person name="Ishmael N."/>
            <person name="John T."/>
            <person name="Darmond C."/>
            <person name="Moisan M.-C."/>
            <person name="Henrissat B."/>
            <person name="Coutinho P.M."/>
            <person name="Lombard V."/>
            <person name="Natvig D.O."/>
            <person name="Lindquist E."/>
            <person name="Schmutz J."/>
            <person name="Lucas S."/>
            <person name="Harris P."/>
            <person name="Powlowski J."/>
            <person name="Bellemare A."/>
            <person name="Taylor D."/>
            <person name="Butler G."/>
            <person name="de Vries R.P."/>
            <person name="Allijn I.E."/>
            <person name="van den Brink J."/>
            <person name="Ushinsky S."/>
            <person name="Storms R."/>
            <person name="Powell A.J."/>
            <person name="Paulsen I.T."/>
            <person name="Elbourne L.D.H."/>
            <person name="Baker S.E."/>
            <person name="Magnuson J."/>
            <person name="LaBoissiere S."/>
            <person name="Clutterbuck A.J."/>
            <person name="Martinez D."/>
            <person name="Wogulis M."/>
            <person name="de Leon A.L."/>
            <person name="Rey M.W."/>
            <person name="Tsang A."/>
        </authorList>
    </citation>
    <scope>NUCLEOTIDE SEQUENCE [LARGE SCALE GENOMIC DNA]</scope>
    <source>
        <strain>ATCC 42464 / BCRC 31852 / DSM 1799</strain>
    </source>
</reference>
<reference key="2">
    <citation type="journal article" date="2010" name="Appl. Microbiol. Biotechnol.">
        <title>Functional expression of a thermophilic glucuronyl esterase from Sporotrichum thermophile: identification of the nucleophilic serine.</title>
        <authorList>
            <person name="Topakas E."/>
            <person name="Moukouli M."/>
            <person name="Dima rogona M."/>
            <person name="Vafiadi C."/>
            <person name="Christakopoulos P."/>
        </authorList>
    </citation>
    <scope>FUNCTION</scope>
    <scope>CATALYTIC ACTIVITY</scope>
    <scope>BIOPHYSICOCHEMICAL PROPERTIES</scope>
    <scope>DOMAIN</scope>
    <scope>ACTIVE SITE</scope>
    <scope>MUTAGENESIS OF SER-213</scope>
    <source>
        <strain>ATCC 42464 / BCRC 31852 / DSM 1799</strain>
    </source>
</reference>
<reference key="3">
    <citation type="journal article" date="2014" name="Appl. Microbiol. Biotechnol.">
        <title>Enzymatic synthesis of model substrates recognized by glucuronoyl esterases from Podospora anserina and Myceliophthora thermophila.</title>
        <authorList>
            <person name="Katsimpouras C."/>
            <person name="Benarouche A."/>
            <person name="Navarro D."/>
            <person name="Karpusas M."/>
            <person name="Dimarogona M."/>
            <person name="Berrin J.G."/>
            <person name="Christakopoulos P."/>
            <person name="Topakas E."/>
        </authorList>
    </citation>
    <scope>BIOPHYSICOCHEMICAL PROPERTIES</scope>
</reference>
<reference key="4">
    <citation type="journal article" date="2013" name="Acta Crystallogr. D">
        <title>The structure of a novel glucuronoyl esterase from Myceliophthora thermophila gives new insights into its role as a potential biocatalyst.</title>
        <authorList>
            <person name="Charavgi M.D."/>
            <person name="Dimarogona M."/>
            <person name="Topakas E."/>
            <person name="Christakopoulos P."/>
            <person name="Chrysina E.D."/>
        </authorList>
    </citation>
    <scope>X-RAY CRYSTALLOGRAPHY (1.55 ANGSTROMS) IN COMPLEX WITH 4-O-METHYL-BETA-D-GLUCOPYRANURONATE</scope>
    <scope>ACTIVE SITE</scope>
    <scope>DISULFIDE BONDS</scope>
</reference>
<gene>
    <name type="primary">ge2</name>
    <name type="ORF">MYCTH_55568</name>
</gene>
<keyword id="KW-0002">3D-structure</keyword>
<keyword id="KW-1015">Disulfide bond</keyword>
<keyword id="KW-0378">Hydrolase</keyword>
<keyword id="KW-0439">Lignin degradation</keyword>
<keyword id="KW-1185">Reference proteome</keyword>
<keyword id="KW-0964">Secreted</keyword>
<keyword id="KW-0719">Serine esterase</keyword>
<keyword id="KW-0732">Signal</keyword>
<dbReference type="EC" id="3.1.1.117" evidence="2"/>
<dbReference type="EMBL" id="CP003006">
    <property type="protein sequence ID" value="AEO60464.1"/>
    <property type="molecule type" value="Genomic_DNA"/>
</dbReference>
<dbReference type="RefSeq" id="XP_003665709.1">
    <property type="nucleotide sequence ID" value="XM_003665661.1"/>
</dbReference>
<dbReference type="PDB" id="4G4G">
    <property type="method" value="X-ray"/>
    <property type="resolution" value="1.55 A"/>
    <property type="chains" value="A=1-397"/>
</dbReference>
<dbReference type="PDB" id="4G4I">
    <property type="method" value="X-ray"/>
    <property type="resolution" value="1.90 A"/>
    <property type="chains" value="A=1-397"/>
</dbReference>
<dbReference type="PDB" id="4G4J">
    <property type="method" value="X-ray"/>
    <property type="resolution" value="2.35 A"/>
    <property type="chains" value="A=1-397"/>
</dbReference>
<dbReference type="PDBsum" id="4G4G"/>
<dbReference type="PDBsum" id="4G4I"/>
<dbReference type="PDBsum" id="4G4J"/>
<dbReference type="SMR" id="G2QJR6"/>
<dbReference type="ESTHER" id="thiha-cip2">
    <property type="family name" value="Glucuronoyl_esterase"/>
</dbReference>
<dbReference type="GeneID" id="11507096"/>
<dbReference type="KEGG" id="mtm:MYCTH_55568"/>
<dbReference type="VEuPathDB" id="FungiDB:MYCTH_55568"/>
<dbReference type="eggNOG" id="ENOG502QS8Y">
    <property type="taxonomic scope" value="Eukaryota"/>
</dbReference>
<dbReference type="HOGENOM" id="CLU_028869_1_1_1"/>
<dbReference type="InParanoid" id="G2QJR6"/>
<dbReference type="OMA" id="SHCQFPS"/>
<dbReference type="OrthoDB" id="3781271at2759"/>
<dbReference type="BRENDA" id="3.1.1.117">
    <property type="organism ID" value="13804"/>
</dbReference>
<dbReference type="SABIO-RK" id="G2QJR6"/>
<dbReference type="EvolutionaryTrace" id="G2QJR6"/>
<dbReference type="Proteomes" id="UP000007322">
    <property type="component" value="Chromosome 5"/>
</dbReference>
<dbReference type="GO" id="GO:0005576">
    <property type="term" value="C:extracellular region"/>
    <property type="evidence" value="ECO:0007669"/>
    <property type="project" value="UniProtKB-SubCell"/>
</dbReference>
<dbReference type="GO" id="GO:0052689">
    <property type="term" value="F:carboxylic ester hydrolase activity"/>
    <property type="evidence" value="ECO:0007669"/>
    <property type="project" value="UniProtKB-KW"/>
</dbReference>
<dbReference type="GO" id="GO:0046274">
    <property type="term" value="P:lignin catabolic process"/>
    <property type="evidence" value="ECO:0007669"/>
    <property type="project" value="UniProtKB-KW"/>
</dbReference>
<dbReference type="Gene3D" id="3.40.50.1820">
    <property type="entry name" value="alpha/beta hydrolase"/>
    <property type="match status" value="1"/>
</dbReference>
<dbReference type="InterPro" id="IPR029058">
    <property type="entry name" value="AB_hydrolase_fold"/>
</dbReference>
<dbReference type="InterPro" id="IPR054579">
    <property type="entry name" value="GCE-like_dom"/>
</dbReference>
<dbReference type="Pfam" id="PF22244">
    <property type="entry name" value="GCE_fung"/>
    <property type="match status" value="1"/>
</dbReference>
<dbReference type="SUPFAM" id="SSF53474">
    <property type="entry name" value="alpha/beta-Hydrolases"/>
    <property type="match status" value="1"/>
</dbReference>
<comment type="function">
    <text evidence="2">Glucuronoyl esterase which may play a significant role in biomass degradation, as it is considered to disconnect hemicellulose from lignin through the hydrolysis of the ester bond between 4-O-methyl-D-glucuronic acid residues of glucuronoxylans and aromatic alcohols of lignin.</text>
</comment>
<comment type="catalytic activity">
    <reaction evidence="2">
        <text>a 4-O-methyl-alpha-D-glucuronosyl ester derivative + H2O = 4-O-methyl-alpha-D-glucuronate derivative + an alcohol + H(+)</text>
        <dbReference type="Rhea" id="RHEA:67452"/>
        <dbReference type="ChEBI" id="CHEBI:15377"/>
        <dbReference type="ChEBI" id="CHEBI:15378"/>
        <dbReference type="ChEBI" id="CHEBI:30879"/>
        <dbReference type="ChEBI" id="CHEBI:171667"/>
        <dbReference type="ChEBI" id="CHEBI:171668"/>
        <dbReference type="EC" id="3.1.1.117"/>
    </reaction>
    <physiologicalReaction direction="left-to-right" evidence="7">
        <dbReference type="Rhea" id="RHEA:67453"/>
    </physiologicalReaction>
</comment>
<comment type="biophysicochemical properties">
    <kinetics>
        <KM evidence="4">3.63 mM for trans-3-phenyl-2-propen-1-yl D-glucopyranosyluronate</KM>
        <KM evidence="4">7.24 mM for 3-phenyl-1-propyl D-glucopyranosyluronate</KM>
        <text evidence="4">kcat is 115.9 min(-1) with trans-3-phenyl-2-propen-1-yl D-glucopyranosyluronate and 166.4 with 3-phenyl-1-propyl D-glucopyranosyluronate as substrate.</text>
    </kinetics>
    <phDependence>
        <text evidence="2">Optimum pH is 7.0.</text>
    </phDependence>
    <temperatureDependence>
        <text evidence="2">Optimum temperature is 55 degrees Celsius.</text>
    </temperatureDependence>
</comment>
<comment type="subcellular location">
    <subcellularLocation>
        <location evidence="6">Secreted</location>
    </subcellularLocation>
</comment>
<comment type="similarity">
    <text evidence="6">Belongs to the carbohydrate esterase 15 (CE15) family.</text>
</comment>